<proteinExistence type="inferred from homology"/>
<comment type="function">
    <text evidence="1">Component of the GID E3 ligase complex recruiting N termini and catalyzing ubiquitination of proteins targeted for degradation. GID E3 is regulated through assembly with interchangeable N-degron-binding substrate receptors induced by distinct environmental perturbations. Required for the adaptation to the presence of glucose in the growth medium; mediates in association with the substrate receptor VID24/GID4 the degradation of enzymes involved in gluconeogenesis when cells are shifted to glucose-containing medium.</text>
</comment>
<comment type="subunit">
    <text evidence="1">Identified in the GID/CTLH complex. In the absence of stress, the complex exists as an inactive anticipatory complex (GID(Ant)), composed of Gid1, the E3 ubiquitin-ligase Gid2, Gid5, Gid8, and the RING-like subunit Gid9, awaiting a substrate receptor to form the active E3 ligase complex. When cells are shifted to glucose-containing medium, the substrate receptor Gid4 is induced and becomes part of the complex, named GID(SR4). Additionally, Gid7 transforms the GID(SR4) E3 ligase core into a higher-order supramolecular assembly (Chelator-GID(SR4)).</text>
</comment>
<comment type="subcellular location">
    <subcellularLocation>
        <location evidence="5">Cytoplasm</location>
    </subcellularLocation>
    <subcellularLocation>
        <location evidence="5">Nucleus</location>
    </subcellularLocation>
</comment>
<comment type="similarity">
    <text evidence="6">Belongs to the GID7 family.</text>
</comment>
<keyword id="KW-0963">Cytoplasm</keyword>
<keyword id="KW-0539">Nucleus</keyword>
<keyword id="KW-1185">Reference proteome</keyword>
<keyword id="KW-0677">Repeat</keyword>
<keyword id="KW-0853">WD repeat</keyword>
<protein>
    <recommendedName>
        <fullName>GID complex subunit 7</fullName>
    </recommendedName>
    <alternativeName>
        <fullName>Glucose-induced degradation protein 7</fullName>
    </alternativeName>
</protein>
<dbReference type="EMBL" id="CU329670">
    <property type="protein sequence ID" value="CAB52267.1"/>
    <property type="molecule type" value="Genomic_DNA"/>
</dbReference>
<dbReference type="PIR" id="T38653">
    <property type="entry name" value="T38653"/>
</dbReference>
<dbReference type="RefSeq" id="NP_593424.1">
    <property type="nucleotide sequence ID" value="NM_001018857.2"/>
</dbReference>
<dbReference type="SMR" id="Q9UT85"/>
<dbReference type="BioGRID" id="279512">
    <property type="interactions" value="17"/>
</dbReference>
<dbReference type="FunCoup" id="Q9UT85">
    <property type="interactions" value="305"/>
</dbReference>
<dbReference type="STRING" id="284812.Q9UT85"/>
<dbReference type="iPTMnet" id="Q9UT85"/>
<dbReference type="PaxDb" id="4896-SPAC343.04c.1"/>
<dbReference type="EnsemblFungi" id="SPAC343.04c.1">
    <property type="protein sequence ID" value="SPAC343.04c.1:pep"/>
    <property type="gene ID" value="SPAC343.04c"/>
</dbReference>
<dbReference type="GeneID" id="2543079"/>
<dbReference type="KEGG" id="spo:2543079"/>
<dbReference type="PomBase" id="SPAC343.04c">
    <property type="gene designation" value="gid7"/>
</dbReference>
<dbReference type="VEuPathDB" id="FungiDB:SPAC343.04c"/>
<dbReference type="eggNOG" id="KOG0293">
    <property type="taxonomic scope" value="Eukaryota"/>
</dbReference>
<dbReference type="HOGENOM" id="CLU_000288_57_25_1"/>
<dbReference type="InParanoid" id="Q9UT85"/>
<dbReference type="OMA" id="GHISGCV"/>
<dbReference type="PhylomeDB" id="Q9UT85"/>
<dbReference type="Reactome" id="R-SPO-9861718">
    <property type="pathway name" value="Regulation of pyruvate metabolism"/>
</dbReference>
<dbReference type="PRO" id="PR:Q9UT85"/>
<dbReference type="Proteomes" id="UP000002485">
    <property type="component" value="Chromosome I"/>
</dbReference>
<dbReference type="GO" id="GO:0005829">
    <property type="term" value="C:cytosol"/>
    <property type="evidence" value="ECO:0007005"/>
    <property type="project" value="PomBase"/>
</dbReference>
<dbReference type="GO" id="GO:0034657">
    <property type="term" value="C:GID complex"/>
    <property type="evidence" value="ECO:0000318"/>
    <property type="project" value="GO_Central"/>
</dbReference>
<dbReference type="GO" id="GO:0005634">
    <property type="term" value="C:nucleus"/>
    <property type="evidence" value="ECO:0007005"/>
    <property type="project" value="PomBase"/>
</dbReference>
<dbReference type="GO" id="GO:0045721">
    <property type="term" value="P:negative regulation of gluconeogenesis"/>
    <property type="evidence" value="ECO:0000266"/>
    <property type="project" value="PomBase"/>
</dbReference>
<dbReference type="GO" id="GO:0043161">
    <property type="term" value="P:proteasome-mediated ubiquitin-dependent protein catabolic process"/>
    <property type="evidence" value="ECO:0000318"/>
    <property type="project" value="GO_Central"/>
</dbReference>
<dbReference type="CDD" id="cd00200">
    <property type="entry name" value="WD40"/>
    <property type="match status" value="1"/>
</dbReference>
<dbReference type="Gene3D" id="2.130.10.10">
    <property type="entry name" value="YVTN repeat-like/Quinoprotein amine dehydrogenase"/>
    <property type="match status" value="3"/>
</dbReference>
<dbReference type="InterPro" id="IPR006595">
    <property type="entry name" value="CTLH_C"/>
</dbReference>
<dbReference type="InterPro" id="IPR020472">
    <property type="entry name" value="G-protein_beta_WD-40_rep"/>
</dbReference>
<dbReference type="InterPro" id="IPR006594">
    <property type="entry name" value="LisH"/>
</dbReference>
<dbReference type="InterPro" id="IPR015943">
    <property type="entry name" value="WD40/YVTN_repeat-like_dom_sf"/>
</dbReference>
<dbReference type="InterPro" id="IPR036322">
    <property type="entry name" value="WD40_repeat_dom_sf"/>
</dbReference>
<dbReference type="InterPro" id="IPR001680">
    <property type="entry name" value="WD40_rpt"/>
</dbReference>
<dbReference type="InterPro" id="IPR051350">
    <property type="entry name" value="WD_repeat-ST_regulator"/>
</dbReference>
<dbReference type="PANTHER" id="PTHR22838">
    <property type="entry name" value="WD REPEAT PROTEIN 26-RELATED"/>
    <property type="match status" value="1"/>
</dbReference>
<dbReference type="PANTHER" id="PTHR22838:SF0">
    <property type="entry name" value="WD REPEAT-CONTAINING PROTEIN 26"/>
    <property type="match status" value="1"/>
</dbReference>
<dbReference type="Pfam" id="PF00400">
    <property type="entry name" value="WD40"/>
    <property type="match status" value="5"/>
</dbReference>
<dbReference type="PRINTS" id="PR00320">
    <property type="entry name" value="GPROTEINBRPT"/>
</dbReference>
<dbReference type="SMART" id="SM00668">
    <property type="entry name" value="CTLH"/>
    <property type="match status" value="1"/>
</dbReference>
<dbReference type="SMART" id="SM00667">
    <property type="entry name" value="LisH"/>
    <property type="match status" value="1"/>
</dbReference>
<dbReference type="SMART" id="SM00320">
    <property type="entry name" value="WD40"/>
    <property type="match status" value="6"/>
</dbReference>
<dbReference type="SUPFAM" id="SSF50978">
    <property type="entry name" value="WD40 repeat-like"/>
    <property type="match status" value="1"/>
</dbReference>
<dbReference type="PROSITE" id="PS50897">
    <property type="entry name" value="CTLH"/>
    <property type="match status" value="1"/>
</dbReference>
<dbReference type="PROSITE" id="PS50896">
    <property type="entry name" value="LISH"/>
    <property type="match status" value="1"/>
</dbReference>
<dbReference type="PROSITE" id="PS00678">
    <property type="entry name" value="WD_REPEATS_1"/>
    <property type="match status" value="1"/>
</dbReference>
<dbReference type="PROSITE" id="PS50082">
    <property type="entry name" value="WD_REPEATS_2"/>
    <property type="match status" value="4"/>
</dbReference>
<dbReference type="PROSITE" id="PS50294">
    <property type="entry name" value="WD_REPEATS_REGION"/>
    <property type="match status" value="1"/>
</dbReference>
<feature type="chain" id="PRO_0000343433" description="GID complex subunit 7">
    <location>
        <begin position="1"/>
        <end position="507"/>
    </location>
</feature>
<feature type="domain" description="LisH" evidence="4">
    <location>
        <begin position="7"/>
        <end position="39"/>
    </location>
</feature>
<feature type="domain" description="CTLH" evidence="3">
    <location>
        <begin position="40"/>
        <end position="97"/>
    </location>
</feature>
<feature type="repeat" description="WD 1" evidence="2">
    <location>
        <begin position="211"/>
        <end position="250"/>
    </location>
</feature>
<feature type="repeat" description="WD 2" evidence="2">
    <location>
        <begin position="253"/>
        <end position="292"/>
    </location>
</feature>
<feature type="repeat" description="WD 3" evidence="2">
    <location>
        <begin position="294"/>
        <end position="334"/>
    </location>
</feature>
<feature type="repeat" description="WD 4" evidence="2">
    <location>
        <begin position="342"/>
        <end position="380"/>
    </location>
</feature>
<feature type="repeat" description="WD 5" evidence="2">
    <location>
        <begin position="381"/>
        <end position="420"/>
    </location>
</feature>
<feature type="repeat" description="WD 6" evidence="2">
    <location>
        <begin position="425"/>
        <end position="467"/>
    </location>
</feature>
<feature type="repeat" description="WD 7" evidence="2">
    <location>
        <begin position="468"/>
        <end position="507"/>
    </location>
</feature>
<reference key="1">
    <citation type="journal article" date="2002" name="Nature">
        <title>The genome sequence of Schizosaccharomyces pombe.</title>
        <authorList>
            <person name="Wood V."/>
            <person name="Gwilliam R."/>
            <person name="Rajandream M.A."/>
            <person name="Lyne M.H."/>
            <person name="Lyne R."/>
            <person name="Stewart A."/>
            <person name="Sgouros J.G."/>
            <person name="Peat N."/>
            <person name="Hayles J."/>
            <person name="Baker S.G."/>
            <person name="Basham D."/>
            <person name="Bowman S."/>
            <person name="Brooks K."/>
            <person name="Brown D."/>
            <person name="Brown S."/>
            <person name="Chillingworth T."/>
            <person name="Churcher C.M."/>
            <person name="Collins M."/>
            <person name="Connor R."/>
            <person name="Cronin A."/>
            <person name="Davis P."/>
            <person name="Feltwell T."/>
            <person name="Fraser A."/>
            <person name="Gentles S."/>
            <person name="Goble A."/>
            <person name="Hamlin N."/>
            <person name="Harris D.E."/>
            <person name="Hidalgo J."/>
            <person name="Hodgson G."/>
            <person name="Holroyd S."/>
            <person name="Hornsby T."/>
            <person name="Howarth S."/>
            <person name="Huckle E.J."/>
            <person name="Hunt S."/>
            <person name="Jagels K."/>
            <person name="James K.D."/>
            <person name="Jones L."/>
            <person name="Jones M."/>
            <person name="Leather S."/>
            <person name="McDonald S."/>
            <person name="McLean J."/>
            <person name="Mooney P."/>
            <person name="Moule S."/>
            <person name="Mungall K.L."/>
            <person name="Murphy L.D."/>
            <person name="Niblett D."/>
            <person name="Odell C."/>
            <person name="Oliver K."/>
            <person name="O'Neil S."/>
            <person name="Pearson D."/>
            <person name="Quail M.A."/>
            <person name="Rabbinowitsch E."/>
            <person name="Rutherford K.M."/>
            <person name="Rutter S."/>
            <person name="Saunders D."/>
            <person name="Seeger K."/>
            <person name="Sharp S."/>
            <person name="Skelton J."/>
            <person name="Simmonds M.N."/>
            <person name="Squares R."/>
            <person name="Squares S."/>
            <person name="Stevens K."/>
            <person name="Taylor K."/>
            <person name="Taylor R.G."/>
            <person name="Tivey A."/>
            <person name="Walsh S.V."/>
            <person name="Warren T."/>
            <person name="Whitehead S."/>
            <person name="Woodward J.R."/>
            <person name="Volckaert G."/>
            <person name="Aert R."/>
            <person name="Robben J."/>
            <person name="Grymonprez B."/>
            <person name="Weltjens I."/>
            <person name="Vanstreels E."/>
            <person name="Rieger M."/>
            <person name="Schaefer M."/>
            <person name="Mueller-Auer S."/>
            <person name="Gabel C."/>
            <person name="Fuchs M."/>
            <person name="Duesterhoeft A."/>
            <person name="Fritzc C."/>
            <person name="Holzer E."/>
            <person name="Moestl D."/>
            <person name="Hilbert H."/>
            <person name="Borzym K."/>
            <person name="Langer I."/>
            <person name="Beck A."/>
            <person name="Lehrach H."/>
            <person name="Reinhardt R."/>
            <person name="Pohl T.M."/>
            <person name="Eger P."/>
            <person name="Zimmermann W."/>
            <person name="Wedler H."/>
            <person name="Wambutt R."/>
            <person name="Purnelle B."/>
            <person name="Goffeau A."/>
            <person name="Cadieu E."/>
            <person name="Dreano S."/>
            <person name="Gloux S."/>
            <person name="Lelaure V."/>
            <person name="Mottier S."/>
            <person name="Galibert F."/>
            <person name="Aves S.J."/>
            <person name="Xiang Z."/>
            <person name="Hunt C."/>
            <person name="Moore K."/>
            <person name="Hurst S.M."/>
            <person name="Lucas M."/>
            <person name="Rochet M."/>
            <person name="Gaillardin C."/>
            <person name="Tallada V.A."/>
            <person name="Garzon A."/>
            <person name="Thode G."/>
            <person name="Daga R.R."/>
            <person name="Cruzado L."/>
            <person name="Jimenez J."/>
            <person name="Sanchez M."/>
            <person name="del Rey F."/>
            <person name="Benito J."/>
            <person name="Dominguez A."/>
            <person name="Revuelta J.L."/>
            <person name="Moreno S."/>
            <person name="Armstrong J."/>
            <person name="Forsburg S.L."/>
            <person name="Cerutti L."/>
            <person name="Lowe T."/>
            <person name="McCombie W.R."/>
            <person name="Paulsen I."/>
            <person name="Potashkin J."/>
            <person name="Shpakovski G.V."/>
            <person name="Ussery D."/>
            <person name="Barrell B.G."/>
            <person name="Nurse P."/>
        </authorList>
    </citation>
    <scope>NUCLEOTIDE SEQUENCE [LARGE SCALE GENOMIC DNA]</scope>
    <source>
        <strain>972 / ATCC 24843</strain>
    </source>
</reference>
<reference key="2">
    <citation type="journal article" date="2006" name="Nat. Biotechnol.">
        <title>ORFeome cloning and global analysis of protein localization in the fission yeast Schizosaccharomyces pombe.</title>
        <authorList>
            <person name="Matsuyama A."/>
            <person name="Arai R."/>
            <person name="Yashiroda Y."/>
            <person name="Shirai A."/>
            <person name="Kamata A."/>
            <person name="Sekido S."/>
            <person name="Kobayashi Y."/>
            <person name="Hashimoto A."/>
            <person name="Hamamoto M."/>
            <person name="Hiraoka Y."/>
            <person name="Horinouchi S."/>
            <person name="Yoshida M."/>
        </authorList>
    </citation>
    <scope>SUBCELLULAR LOCATION [LARGE SCALE ANALYSIS]</scope>
</reference>
<sequence length="507" mass="58404">MALDEKFQLEVIHLLLQFLNDYGYDESLKALEKETGLVSETEDVKRLKQAVLQGDWITAEAAFSIMQLRDESKRKEAQFLLQKQRCLELARSGAICEAIYVLQNFESTDFNKEKERLVSIILESNNKSNNELITKNGYGNTRLDLLNQLSEYISPEILLPKRRLEHLLQQAKDYQVSSQVYHNVLKNFSFLSDYKADPSELPTKEYHVFHDHSDEVWQISYSHNGRYLASASKDKTAIIFDVVNLKRVFRLIGHIDTVAYIRWSPDDRYLLSCSCDKSVILWDAFTGEKLRDYKHGFSVSCCCWLPDGLSFITGSPDCHITHWSLNGEILYKWEDVNIYDMALTSDGTKLYIVGFEQLINAEDKHIAIYSVETRECIKKISLQSKVTSICLSKDSKYALTNLEPHTTFLWDLEENRIVRQYMGHKLGNFLIGSCFGGKDDTFVLSGSEDDKIRIWHRESGKLLATLSGHVKCVNYVAYNPVDPYQFASAGDDNTVRIWSNKDNPRRQ</sequence>
<organism>
    <name type="scientific">Schizosaccharomyces pombe (strain 972 / ATCC 24843)</name>
    <name type="common">Fission yeast</name>
    <dbReference type="NCBI Taxonomy" id="284812"/>
    <lineage>
        <taxon>Eukaryota</taxon>
        <taxon>Fungi</taxon>
        <taxon>Dikarya</taxon>
        <taxon>Ascomycota</taxon>
        <taxon>Taphrinomycotina</taxon>
        <taxon>Schizosaccharomycetes</taxon>
        <taxon>Schizosaccharomycetales</taxon>
        <taxon>Schizosaccharomycetaceae</taxon>
        <taxon>Schizosaccharomyces</taxon>
    </lineage>
</organism>
<gene>
    <name type="primary">gid7</name>
    <name evidence="7" type="ORF">SPAC343.04c</name>
</gene>
<evidence type="ECO:0000250" key="1">
    <source>
        <dbReference type="UniProtKB" id="P25569"/>
    </source>
</evidence>
<evidence type="ECO:0000255" key="2"/>
<evidence type="ECO:0000255" key="3">
    <source>
        <dbReference type="PROSITE-ProRule" id="PRU00058"/>
    </source>
</evidence>
<evidence type="ECO:0000255" key="4">
    <source>
        <dbReference type="PROSITE-ProRule" id="PRU00126"/>
    </source>
</evidence>
<evidence type="ECO:0000269" key="5">
    <source>
    </source>
</evidence>
<evidence type="ECO:0000305" key="6"/>
<evidence type="ECO:0000312" key="7">
    <source>
        <dbReference type="PomBase" id="SPAC343.04c"/>
    </source>
</evidence>
<accession>Q9UT85</accession>
<name>GID7_SCHPO</name>